<dbReference type="EMBL" id="CY002103">
    <property type="protein sequence ID" value="AAZ43393.1"/>
    <property type="molecule type" value="Genomic_RNA"/>
</dbReference>
<dbReference type="SMR" id="Q463W5"/>
<dbReference type="PRO" id="PR:Q463W5"/>
<dbReference type="Proteomes" id="UP000118421">
    <property type="component" value="Genome"/>
</dbReference>
<dbReference type="GO" id="GO:0033650">
    <property type="term" value="C:host cell mitochondrion"/>
    <property type="evidence" value="ECO:0007669"/>
    <property type="project" value="UniProtKB-SubCell"/>
</dbReference>
<dbReference type="GO" id="GO:0042025">
    <property type="term" value="C:host cell nucleus"/>
    <property type="evidence" value="ECO:0007669"/>
    <property type="project" value="UniProtKB-SubCell"/>
</dbReference>
<dbReference type="GO" id="GO:0044423">
    <property type="term" value="C:virion component"/>
    <property type="evidence" value="ECO:0007669"/>
    <property type="project" value="UniProtKB-UniRule"/>
</dbReference>
<dbReference type="GO" id="GO:0003723">
    <property type="term" value="F:RNA binding"/>
    <property type="evidence" value="ECO:0007669"/>
    <property type="project" value="UniProtKB-UniRule"/>
</dbReference>
<dbReference type="GO" id="GO:0003968">
    <property type="term" value="F:RNA-directed RNA polymerase activity"/>
    <property type="evidence" value="ECO:0007669"/>
    <property type="project" value="UniProtKB-UniRule"/>
</dbReference>
<dbReference type="GO" id="GO:0006370">
    <property type="term" value="P:7-methylguanosine mRNA capping"/>
    <property type="evidence" value="ECO:0007669"/>
    <property type="project" value="UniProtKB-UniRule"/>
</dbReference>
<dbReference type="GO" id="GO:0075526">
    <property type="term" value="P:cap snatching"/>
    <property type="evidence" value="ECO:0007669"/>
    <property type="project" value="UniProtKB-UniRule"/>
</dbReference>
<dbReference type="GO" id="GO:0006351">
    <property type="term" value="P:DNA-templated transcription"/>
    <property type="evidence" value="ECO:0007669"/>
    <property type="project" value="UniProtKB-UniRule"/>
</dbReference>
<dbReference type="GO" id="GO:0039545">
    <property type="term" value="P:symbiont-mediated suppression of host cytoplasmic pattern recognition receptor signaling pathway via inhibition of MAVS activity"/>
    <property type="evidence" value="ECO:0007669"/>
    <property type="project" value="UniProtKB-UniRule"/>
</dbReference>
<dbReference type="GO" id="GO:0039657">
    <property type="term" value="P:symbiont-mediated suppression of host gene expression"/>
    <property type="evidence" value="ECO:0007669"/>
    <property type="project" value="UniProtKB-KW"/>
</dbReference>
<dbReference type="GO" id="GO:0039523">
    <property type="term" value="P:symbiont-mediated suppression of host mRNA transcription via inhibition of RNA polymerase II activity"/>
    <property type="evidence" value="ECO:0007669"/>
    <property type="project" value="UniProtKB-UniRule"/>
</dbReference>
<dbReference type="GO" id="GO:0039694">
    <property type="term" value="P:viral RNA genome replication"/>
    <property type="evidence" value="ECO:0007669"/>
    <property type="project" value="InterPro"/>
</dbReference>
<dbReference type="FunFam" id="3.30.30.90:FF:000001">
    <property type="entry name" value="Polymerase basic protein 2"/>
    <property type="match status" value="1"/>
</dbReference>
<dbReference type="Gene3D" id="3.30.30.90">
    <property type="entry name" value="Polymerase Basic Protein 2, C-terminal domain"/>
    <property type="match status" value="1"/>
</dbReference>
<dbReference type="HAMAP" id="MF_04062">
    <property type="entry name" value="INV_PB2"/>
    <property type="match status" value="1"/>
</dbReference>
<dbReference type="InterPro" id="IPR049110">
    <property type="entry name" value="Flu_PB2_2nd"/>
</dbReference>
<dbReference type="InterPro" id="IPR049114">
    <property type="entry name" value="Flu_PB2_6th"/>
</dbReference>
<dbReference type="InterPro" id="IPR049115">
    <property type="entry name" value="Flu_PB2_C"/>
</dbReference>
<dbReference type="InterPro" id="IPR048298">
    <property type="entry name" value="Flu_PB2_CAP-bd"/>
</dbReference>
<dbReference type="InterPro" id="IPR049111">
    <property type="entry name" value="Flu_PB2_middle"/>
</dbReference>
<dbReference type="InterPro" id="IPR049106">
    <property type="entry name" value="Flu_PB2_N"/>
</dbReference>
<dbReference type="InterPro" id="IPR001591">
    <property type="entry name" value="INV_PB2"/>
</dbReference>
<dbReference type="InterPro" id="IPR049113">
    <property type="entry name" value="PB2_helical"/>
</dbReference>
<dbReference type="InterPro" id="IPR037258">
    <property type="entry name" value="PDB2_C"/>
</dbReference>
<dbReference type="Pfam" id="PF20947">
    <property type="entry name" value="Flu_PB2_1st"/>
    <property type="match status" value="1"/>
</dbReference>
<dbReference type="Pfam" id="PF20948">
    <property type="entry name" value="Flu_PB2_2nd"/>
    <property type="match status" value="1"/>
</dbReference>
<dbReference type="Pfam" id="PF20949">
    <property type="entry name" value="Flu_PB2_3rd"/>
    <property type="match status" value="1"/>
</dbReference>
<dbReference type="Pfam" id="PF20950">
    <property type="entry name" value="Flu_PB2_4th"/>
    <property type="match status" value="1"/>
</dbReference>
<dbReference type="Pfam" id="PF00604">
    <property type="entry name" value="Flu_PB2_5th"/>
    <property type="match status" value="1"/>
</dbReference>
<dbReference type="Pfam" id="PF20951">
    <property type="entry name" value="Flu_PB2_6th"/>
    <property type="match status" value="1"/>
</dbReference>
<dbReference type="Pfam" id="PF20952">
    <property type="entry name" value="Flu_PB2_7th"/>
    <property type="match status" value="1"/>
</dbReference>
<dbReference type="SUPFAM" id="SSF160453">
    <property type="entry name" value="PB2 C-terminal domain-like"/>
    <property type="match status" value="1"/>
</dbReference>
<evidence type="ECO:0000255" key="1">
    <source>
        <dbReference type="HAMAP-Rule" id="MF_04062"/>
    </source>
</evidence>
<proteinExistence type="inferred from homology"/>
<protein>
    <recommendedName>
        <fullName evidence="1">Polymerase basic protein 2</fullName>
    </recommendedName>
    <alternativeName>
        <fullName evidence="1">RNA-directed RNA polymerase subunit P3</fullName>
    </alternativeName>
</protein>
<gene>
    <name evidence="1" type="primary">PB2</name>
</gene>
<name>PB2_I72A3</name>
<keyword id="KW-1157">Cap snatching</keyword>
<keyword id="KW-1262">Eukaryotic host gene expression shutoff by virus</keyword>
<keyword id="KW-1191">Eukaryotic host transcription shutoff by virus</keyword>
<keyword id="KW-1190">Host gene expression shutoff by virus</keyword>
<keyword id="KW-1045">Host mitochondrion</keyword>
<keyword id="KW-1048">Host nucleus</keyword>
<keyword id="KW-0945">Host-virus interaction</keyword>
<keyword id="KW-1090">Inhibition of host innate immune response by virus</keyword>
<keyword id="KW-1097">Inhibition of host MAVS by virus</keyword>
<keyword id="KW-1113">Inhibition of host RLR pathway by virus</keyword>
<keyword id="KW-1104">Inhibition of host RNA polymerase II by virus</keyword>
<keyword id="KW-0506">mRNA capping</keyword>
<keyword id="KW-0507">mRNA processing</keyword>
<keyword id="KW-0899">Viral immunoevasion</keyword>
<keyword id="KW-1195">Viral transcription</keyword>
<keyword id="KW-0946">Virion</keyword>
<comment type="function">
    <text evidence="1">Plays an essential role in transcription initiation and cap-stealing mechanism, in which cellular capped pre-mRNAs are used to generate primers for viral transcription. Recognizes and binds the 7-methylguanosine-containing cap of the target pre-RNA which is subsequently cleaved after 10-13 nucleotides by the viral protein PA. Plays a role in the initiation of the viral genome replication and modulates the activity of the ribonucleoprotein (RNP) complex. In addition, participates in the inhibition of type I interferon induction through interaction with and inhibition of the host mitochondrial antiviral signaling protein MAVS.</text>
</comment>
<comment type="subunit">
    <text evidence="1">Influenza RNA polymerase is composed of three subunits: PB1, PB2 and PA. Interacts (via N-terminus) with PB1 (via C-terminus). Interacts with nucleoprotein NP (via N-terminus). Interacts (via N-terminus) with host MAVS (via N-terminus); this interaction inhibits host innate immune response.</text>
</comment>
<comment type="subcellular location">
    <subcellularLocation>
        <location evidence="1">Virion</location>
    </subcellularLocation>
    <subcellularLocation>
        <location evidence="1">Host nucleus</location>
    </subcellularLocation>
    <subcellularLocation>
        <location evidence="1">Host mitochondrion</location>
    </subcellularLocation>
</comment>
<comment type="similarity">
    <text evidence="1">Belongs to the influenza viruses PB2 family.</text>
</comment>
<accession>Q463W5</accession>
<organismHost>
    <name type="scientific">Aves</name>
    <dbReference type="NCBI Taxonomy" id="8782"/>
</organismHost>
<organismHost>
    <name type="scientific">Cetacea</name>
    <name type="common">whales</name>
    <dbReference type="NCBI Taxonomy" id="9721"/>
</organismHost>
<organismHost>
    <name type="scientific">Homo sapiens</name>
    <name type="common">Human</name>
    <dbReference type="NCBI Taxonomy" id="9606"/>
</organismHost>
<organismHost>
    <name type="scientific">Phocidae</name>
    <name type="common">true seals</name>
    <dbReference type="NCBI Taxonomy" id="9709"/>
</organismHost>
<organismHost>
    <name type="scientific">Sus scrofa</name>
    <name type="common">Pig</name>
    <dbReference type="NCBI Taxonomy" id="9823"/>
</organismHost>
<feature type="chain" id="PRO_0000279638" description="Polymerase basic protein 2">
    <location>
        <begin position="1"/>
        <end position="759"/>
    </location>
</feature>
<feature type="short sequence motif" description="Nuclear localization signal" evidence="1">
    <location>
        <begin position="736"/>
        <end position="739"/>
    </location>
</feature>
<feature type="site" description="Mammalian adaptation" evidence="1">
    <location>
        <position position="627"/>
    </location>
</feature>
<reference key="1">
    <citation type="submission" date="2005-08" db="EMBL/GenBank/DDBJ databases">
        <title>The NIAID influenza genome sequencing project.</title>
        <authorList>
            <person name="Ghedin E."/>
            <person name="Spiro D."/>
            <person name="Miller N."/>
            <person name="Zaborsky J."/>
            <person name="Feldblyum T."/>
            <person name="Subbu V."/>
            <person name="Shumway M."/>
            <person name="Sparenborg J."/>
            <person name="Groveman L."/>
            <person name="Halpin R."/>
            <person name="Sitz J."/>
            <person name="Koo H."/>
            <person name="Salzberg S.L."/>
            <person name="Webster R.G."/>
            <person name="Hoffmann E."/>
            <person name="Krauss S."/>
            <person name="Naeve C."/>
            <person name="Bao Y."/>
            <person name="Bolotov P."/>
            <person name="Dernovoy D."/>
            <person name="Kiryutin B."/>
            <person name="Lipman D.J."/>
            <person name="Tatusova T."/>
        </authorList>
    </citation>
    <scope>NUCLEOTIDE SEQUENCE [GENOMIC RNA]</scope>
</reference>
<sequence>MERIKELRNLMSQSRTREILTKTTVDHMAIIKKYTSGRQEKNPSLRMKWMMAMKYPITADKRITEMVPERNEQGQTLWSKMSDAGSDRVMVSPLAVTWWNRNGPVTSTVHYPKVYKTYFDKVERLKHGTFGPVHFRNQVKIRRRVDINPGHADLSAKEAQDVIMEVVFPNEVGARILTSESQLTITKEKKEELQDCKISPLMVAYMLERELVRKTRFLPVAGGTSSVYIEVLHLTQGTCWEQMYTPGGEVRNDDVDQSLIIAARNIVRRAAVSADPLASLLEMCHSTLIGGTRMVDILRQNPTEEQAVDICKAAMGLRISSSFSFGGFTFKRTSGSSIKREEEVLTGNLQTLKIRVHEGYEEFTMVGKRATAILRKATRRLVQLIVSGRDEQSIAEAIIVAMVFSQEDCMIKAVRGDLNFVNRANQRLNPMHQLLRHFQKDAKVLFQNWGIEHIDNVMGMVGVLPDMTPSTEMSMRGIRVSKMGVDEYSSTERVVVSIDRFLRVRDQRGNVLLSPEEVSETQGTERLTITYSSSMMWEINGPESVLVNTYQWIIRNWETVKIQWSQNPTMLYNKMEFEPFQSLVPKAIRGQYSGFVRTLFQQMRDVLGTFDTTQIIKLLPFAAAPPKQSRMQFSSLTVNVRGSGMRILVRGNSPVFNYNKTTKRLTILGKDAGTLIEDPDESTSGVESAVLRGFLILGKEDRRYGPALSINELSNLAKGEKANVLIGQGDVVLVMKRKRDSSILTDSQTATKRIRMAIN</sequence>
<organism>
    <name type="scientific">Influenza A virus (strain A/Memphis/102/1972 H3N2)</name>
    <dbReference type="NCBI Taxonomy" id="385640"/>
    <lineage>
        <taxon>Viruses</taxon>
        <taxon>Riboviria</taxon>
        <taxon>Orthornavirae</taxon>
        <taxon>Negarnaviricota</taxon>
        <taxon>Polyploviricotina</taxon>
        <taxon>Insthoviricetes</taxon>
        <taxon>Articulavirales</taxon>
        <taxon>Orthomyxoviridae</taxon>
        <taxon>Alphainfluenzavirus</taxon>
        <taxon>Alphainfluenzavirus influenzae</taxon>
        <taxon>Influenza A virus</taxon>
    </lineage>
</organism>